<dbReference type="EC" id="3.5.1.88" evidence="1"/>
<dbReference type="EMBL" id="CP000886">
    <property type="protein sequence ID" value="ABX69564.1"/>
    <property type="molecule type" value="Genomic_DNA"/>
</dbReference>
<dbReference type="RefSeq" id="WP_000114987.1">
    <property type="nucleotide sequence ID" value="NC_010102.1"/>
</dbReference>
<dbReference type="BMRB" id="A9N8B1"/>
<dbReference type="SMR" id="A9N8B1"/>
<dbReference type="KEGG" id="spq:SPAB_04247"/>
<dbReference type="PATRIC" id="fig|1016998.12.peg.3994"/>
<dbReference type="HOGENOM" id="CLU_061901_2_1_6"/>
<dbReference type="BioCyc" id="SENT1016998:SPAB_RS17265-MONOMER"/>
<dbReference type="Proteomes" id="UP000008556">
    <property type="component" value="Chromosome"/>
</dbReference>
<dbReference type="GO" id="GO:0046872">
    <property type="term" value="F:metal ion binding"/>
    <property type="evidence" value="ECO:0007669"/>
    <property type="project" value="UniProtKB-KW"/>
</dbReference>
<dbReference type="GO" id="GO:0042586">
    <property type="term" value="F:peptide deformylase activity"/>
    <property type="evidence" value="ECO:0007669"/>
    <property type="project" value="UniProtKB-UniRule"/>
</dbReference>
<dbReference type="GO" id="GO:0043686">
    <property type="term" value="P:co-translational protein modification"/>
    <property type="evidence" value="ECO:0007669"/>
    <property type="project" value="TreeGrafter"/>
</dbReference>
<dbReference type="GO" id="GO:0006412">
    <property type="term" value="P:translation"/>
    <property type="evidence" value="ECO:0007669"/>
    <property type="project" value="UniProtKB-UniRule"/>
</dbReference>
<dbReference type="CDD" id="cd00487">
    <property type="entry name" value="Pep_deformylase"/>
    <property type="match status" value="1"/>
</dbReference>
<dbReference type="FunFam" id="3.90.45.10:FF:000001">
    <property type="entry name" value="Peptide deformylase"/>
    <property type="match status" value="1"/>
</dbReference>
<dbReference type="Gene3D" id="3.90.45.10">
    <property type="entry name" value="Peptide deformylase"/>
    <property type="match status" value="1"/>
</dbReference>
<dbReference type="HAMAP" id="MF_00163">
    <property type="entry name" value="Pep_deformylase"/>
    <property type="match status" value="1"/>
</dbReference>
<dbReference type="InterPro" id="IPR023635">
    <property type="entry name" value="Peptide_deformylase"/>
</dbReference>
<dbReference type="InterPro" id="IPR036821">
    <property type="entry name" value="Peptide_deformylase_sf"/>
</dbReference>
<dbReference type="NCBIfam" id="TIGR00079">
    <property type="entry name" value="pept_deformyl"/>
    <property type="match status" value="1"/>
</dbReference>
<dbReference type="NCBIfam" id="NF001159">
    <property type="entry name" value="PRK00150.1-3"/>
    <property type="match status" value="1"/>
</dbReference>
<dbReference type="PANTHER" id="PTHR10458">
    <property type="entry name" value="PEPTIDE DEFORMYLASE"/>
    <property type="match status" value="1"/>
</dbReference>
<dbReference type="PANTHER" id="PTHR10458:SF21">
    <property type="entry name" value="PEPTIDE DEFORMYLASE"/>
    <property type="match status" value="1"/>
</dbReference>
<dbReference type="Pfam" id="PF01327">
    <property type="entry name" value="Pep_deformylase"/>
    <property type="match status" value="1"/>
</dbReference>
<dbReference type="PIRSF" id="PIRSF004749">
    <property type="entry name" value="Pep_def"/>
    <property type="match status" value="1"/>
</dbReference>
<dbReference type="PRINTS" id="PR01576">
    <property type="entry name" value="PDEFORMYLASE"/>
</dbReference>
<dbReference type="SUPFAM" id="SSF56420">
    <property type="entry name" value="Peptide deformylase"/>
    <property type="match status" value="1"/>
</dbReference>
<accession>A9N8B1</accession>
<evidence type="ECO:0000255" key="1">
    <source>
        <dbReference type="HAMAP-Rule" id="MF_00163"/>
    </source>
</evidence>
<proteinExistence type="inferred from homology"/>
<organism>
    <name type="scientific">Salmonella paratyphi B (strain ATCC BAA-1250 / SPB7)</name>
    <dbReference type="NCBI Taxonomy" id="1016998"/>
    <lineage>
        <taxon>Bacteria</taxon>
        <taxon>Pseudomonadati</taxon>
        <taxon>Pseudomonadota</taxon>
        <taxon>Gammaproteobacteria</taxon>
        <taxon>Enterobacterales</taxon>
        <taxon>Enterobacteriaceae</taxon>
        <taxon>Salmonella</taxon>
    </lineage>
</organism>
<comment type="function">
    <text evidence="1">Removes the formyl group from the N-terminal Met of newly synthesized proteins. Requires at least a dipeptide for an efficient rate of reaction. N-terminal L-methionine is a prerequisite for activity but the enzyme has broad specificity at other positions.</text>
</comment>
<comment type="catalytic activity">
    <reaction evidence="1">
        <text>N-terminal N-formyl-L-methionyl-[peptide] + H2O = N-terminal L-methionyl-[peptide] + formate</text>
        <dbReference type="Rhea" id="RHEA:24420"/>
        <dbReference type="Rhea" id="RHEA-COMP:10639"/>
        <dbReference type="Rhea" id="RHEA-COMP:10640"/>
        <dbReference type="ChEBI" id="CHEBI:15377"/>
        <dbReference type="ChEBI" id="CHEBI:15740"/>
        <dbReference type="ChEBI" id="CHEBI:49298"/>
        <dbReference type="ChEBI" id="CHEBI:64731"/>
        <dbReference type="EC" id="3.5.1.88"/>
    </reaction>
</comment>
<comment type="cofactor">
    <cofactor evidence="1">
        <name>Fe(2+)</name>
        <dbReference type="ChEBI" id="CHEBI:29033"/>
    </cofactor>
    <text evidence="1">Binds 1 Fe(2+) ion.</text>
</comment>
<comment type="similarity">
    <text evidence="1">Belongs to the polypeptide deformylase family.</text>
</comment>
<reference key="1">
    <citation type="submission" date="2007-11" db="EMBL/GenBank/DDBJ databases">
        <authorList>
            <consortium name="The Salmonella enterica serovar Paratyphi B Genome Sequencing Project"/>
            <person name="McClelland M."/>
            <person name="Sanderson E.K."/>
            <person name="Porwollik S."/>
            <person name="Spieth J."/>
            <person name="Clifton W.S."/>
            <person name="Fulton R."/>
            <person name="Cordes M."/>
            <person name="Wollam A."/>
            <person name="Shah N."/>
            <person name="Pepin K."/>
            <person name="Bhonagiri V."/>
            <person name="Nash W."/>
            <person name="Johnson M."/>
            <person name="Thiruvilangam P."/>
            <person name="Wilson R."/>
        </authorList>
    </citation>
    <scope>NUCLEOTIDE SEQUENCE [LARGE SCALE GENOMIC DNA]</scope>
    <source>
        <strain>ATCC BAA-1250 / SPB7</strain>
    </source>
</reference>
<name>DEF_SALPB</name>
<sequence length="169" mass="19282">MSVLQVLHIPDERLRKVAKPVEEVNAEIQRIVDDMFETMYAEEGIGLAATQVDIHQRIIVIDVSENRDERLVLINPELLEKSGETGIEEGCLSIPEQRALVPRAEKVKIRALDRDGNPFELEADGLLAICIQHEMDHLVGKLFIDYLSPLKQQRIRQKVEKLDRLNARA</sequence>
<gene>
    <name evidence="1" type="primary">def</name>
    <name type="ordered locus">SPAB_04247</name>
</gene>
<feature type="chain" id="PRO_1000076951" description="Peptide deformylase">
    <location>
        <begin position="1"/>
        <end position="169"/>
    </location>
</feature>
<feature type="active site" evidence="1">
    <location>
        <position position="134"/>
    </location>
</feature>
<feature type="binding site" evidence="1">
    <location>
        <position position="91"/>
    </location>
    <ligand>
        <name>Fe cation</name>
        <dbReference type="ChEBI" id="CHEBI:24875"/>
    </ligand>
</feature>
<feature type="binding site" evidence="1">
    <location>
        <position position="133"/>
    </location>
    <ligand>
        <name>Fe cation</name>
        <dbReference type="ChEBI" id="CHEBI:24875"/>
    </ligand>
</feature>
<feature type="binding site" evidence="1">
    <location>
        <position position="137"/>
    </location>
    <ligand>
        <name>Fe cation</name>
        <dbReference type="ChEBI" id="CHEBI:24875"/>
    </ligand>
</feature>
<keyword id="KW-0378">Hydrolase</keyword>
<keyword id="KW-0408">Iron</keyword>
<keyword id="KW-0479">Metal-binding</keyword>
<keyword id="KW-0648">Protein biosynthesis</keyword>
<protein>
    <recommendedName>
        <fullName evidence="1">Peptide deformylase</fullName>
        <shortName evidence="1">PDF</shortName>
        <ecNumber evidence="1">3.5.1.88</ecNumber>
    </recommendedName>
    <alternativeName>
        <fullName evidence="1">Polypeptide deformylase</fullName>
    </alternativeName>
</protein>